<dbReference type="EC" id="6.3.3.1" evidence="1"/>
<dbReference type="EMBL" id="CP000698">
    <property type="protein sequence ID" value="ABQ26341.1"/>
    <property type="molecule type" value="Genomic_DNA"/>
</dbReference>
<dbReference type="RefSeq" id="WP_011939042.1">
    <property type="nucleotide sequence ID" value="NC_009483.1"/>
</dbReference>
<dbReference type="SMR" id="A5G3H3"/>
<dbReference type="STRING" id="351605.Gura_2153"/>
<dbReference type="KEGG" id="gur:Gura_2153"/>
<dbReference type="HOGENOM" id="CLU_047116_0_0_7"/>
<dbReference type="OrthoDB" id="9777881at2"/>
<dbReference type="UniPathway" id="UPA00074">
    <property type="reaction ID" value="UER00129"/>
</dbReference>
<dbReference type="Proteomes" id="UP000006695">
    <property type="component" value="Chromosome"/>
</dbReference>
<dbReference type="GO" id="GO:0005829">
    <property type="term" value="C:cytosol"/>
    <property type="evidence" value="ECO:0007669"/>
    <property type="project" value="TreeGrafter"/>
</dbReference>
<dbReference type="GO" id="GO:0005524">
    <property type="term" value="F:ATP binding"/>
    <property type="evidence" value="ECO:0007669"/>
    <property type="project" value="UniProtKB-KW"/>
</dbReference>
<dbReference type="GO" id="GO:0004637">
    <property type="term" value="F:phosphoribosylamine-glycine ligase activity"/>
    <property type="evidence" value="ECO:0007669"/>
    <property type="project" value="TreeGrafter"/>
</dbReference>
<dbReference type="GO" id="GO:0004641">
    <property type="term" value="F:phosphoribosylformylglycinamidine cyclo-ligase activity"/>
    <property type="evidence" value="ECO:0007669"/>
    <property type="project" value="UniProtKB-UniRule"/>
</dbReference>
<dbReference type="GO" id="GO:0006189">
    <property type="term" value="P:'de novo' IMP biosynthetic process"/>
    <property type="evidence" value="ECO:0007669"/>
    <property type="project" value="UniProtKB-UniRule"/>
</dbReference>
<dbReference type="GO" id="GO:0046084">
    <property type="term" value="P:adenine biosynthetic process"/>
    <property type="evidence" value="ECO:0007669"/>
    <property type="project" value="TreeGrafter"/>
</dbReference>
<dbReference type="CDD" id="cd02196">
    <property type="entry name" value="PurM"/>
    <property type="match status" value="1"/>
</dbReference>
<dbReference type="FunFam" id="3.30.1330.10:FF:000001">
    <property type="entry name" value="Phosphoribosylformylglycinamidine cyclo-ligase"/>
    <property type="match status" value="1"/>
</dbReference>
<dbReference type="FunFam" id="3.90.650.10:FF:000001">
    <property type="entry name" value="Phosphoribosylformylglycinamidine cyclo-ligase"/>
    <property type="match status" value="1"/>
</dbReference>
<dbReference type="Gene3D" id="3.90.650.10">
    <property type="entry name" value="PurM-like C-terminal domain"/>
    <property type="match status" value="1"/>
</dbReference>
<dbReference type="Gene3D" id="3.30.1330.10">
    <property type="entry name" value="PurM-like, N-terminal domain"/>
    <property type="match status" value="1"/>
</dbReference>
<dbReference type="HAMAP" id="MF_00741">
    <property type="entry name" value="AIRS"/>
    <property type="match status" value="1"/>
</dbReference>
<dbReference type="InterPro" id="IPR010918">
    <property type="entry name" value="PurM-like_C_dom"/>
</dbReference>
<dbReference type="InterPro" id="IPR036676">
    <property type="entry name" value="PurM-like_C_sf"/>
</dbReference>
<dbReference type="InterPro" id="IPR016188">
    <property type="entry name" value="PurM-like_N"/>
</dbReference>
<dbReference type="InterPro" id="IPR036921">
    <property type="entry name" value="PurM-like_N_sf"/>
</dbReference>
<dbReference type="InterPro" id="IPR004733">
    <property type="entry name" value="PurM_cligase"/>
</dbReference>
<dbReference type="NCBIfam" id="TIGR00878">
    <property type="entry name" value="purM"/>
    <property type="match status" value="1"/>
</dbReference>
<dbReference type="PANTHER" id="PTHR10520:SF12">
    <property type="entry name" value="TRIFUNCTIONAL PURINE BIOSYNTHETIC PROTEIN ADENOSINE-3"/>
    <property type="match status" value="1"/>
</dbReference>
<dbReference type="PANTHER" id="PTHR10520">
    <property type="entry name" value="TRIFUNCTIONAL PURINE BIOSYNTHETIC PROTEIN ADENOSINE-3-RELATED"/>
    <property type="match status" value="1"/>
</dbReference>
<dbReference type="Pfam" id="PF00586">
    <property type="entry name" value="AIRS"/>
    <property type="match status" value="1"/>
</dbReference>
<dbReference type="Pfam" id="PF02769">
    <property type="entry name" value="AIRS_C"/>
    <property type="match status" value="1"/>
</dbReference>
<dbReference type="SUPFAM" id="SSF56042">
    <property type="entry name" value="PurM C-terminal domain-like"/>
    <property type="match status" value="1"/>
</dbReference>
<dbReference type="SUPFAM" id="SSF55326">
    <property type="entry name" value="PurM N-terminal domain-like"/>
    <property type="match status" value="1"/>
</dbReference>
<comment type="catalytic activity">
    <reaction evidence="1">
        <text>2-formamido-N(1)-(5-O-phospho-beta-D-ribosyl)acetamidine + ATP = 5-amino-1-(5-phospho-beta-D-ribosyl)imidazole + ADP + phosphate + H(+)</text>
        <dbReference type="Rhea" id="RHEA:23032"/>
        <dbReference type="ChEBI" id="CHEBI:15378"/>
        <dbReference type="ChEBI" id="CHEBI:30616"/>
        <dbReference type="ChEBI" id="CHEBI:43474"/>
        <dbReference type="ChEBI" id="CHEBI:137981"/>
        <dbReference type="ChEBI" id="CHEBI:147287"/>
        <dbReference type="ChEBI" id="CHEBI:456216"/>
        <dbReference type="EC" id="6.3.3.1"/>
    </reaction>
</comment>
<comment type="pathway">
    <text evidence="1">Purine metabolism; IMP biosynthesis via de novo pathway; 5-amino-1-(5-phospho-D-ribosyl)imidazole from N(2)-formyl-N(1)-(5-phospho-D-ribosyl)glycinamide: step 2/2.</text>
</comment>
<comment type="subcellular location">
    <subcellularLocation>
        <location evidence="1">Cytoplasm</location>
    </subcellularLocation>
</comment>
<comment type="similarity">
    <text evidence="1">Belongs to the AIR synthase family.</text>
</comment>
<evidence type="ECO:0000255" key="1">
    <source>
        <dbReference type="HAMAP-Rule" id="MF_00741"/>
    </source>
</evidence>
<name>PUR5_GEOUR</name>
<protein>
    <recommendedName>
        <fullName evidence="1">Phosphoribosylformylglycinamidine cyclo-ligase</fullName>
        <ecNumber evidence="1">6.3.3.1</ecNumber>
    </recommendedName>
    <alternativeName>
        <fullName evidence="1">AIR synthase</fullName>
    </alternativeName>
    <alternativeName>
        <fullName evidence="1">AIRS</fullName>
    </alternativeName>
    <alternativeName>
        <fullName evidence="1">Phosphoribosyl-aminoimidazole synthetase</fullName>
    </alternativeName>
</protein>
<feature type="chain" id="PRO_1000083459" description="Phosphoribosylformylglycinamidine cyclo-ligase">
    <location>
        <begin position="1"/>
        <end position="348"/>
    </location>
</feature>
<keyword id="KW-0067">ATP-binding</keyword>
<keyword id="KW-0963">Cytoplasm</keyword>
<keyword id="KW-0436">Ligase</keyword>
<keyword id="KW-0547">Nucleotide-binding</keyword>
<keyword id="KW-0658">Purine biosynthesis</keyword>
<keyword id="KW-1185">Reference proteome</keyword>
<reference key="1">
    <citation type="submission" date="2007-05" db="EMBL/GenBank/DDBJ databases">
        <title>Complete sequence of Geobacter uraniireducens Rf4.</title>
        <authorList>
            <consortium name="US DOE Joint Genome Institute"/>
            <person name="Copeland A."/>
            <person name="Lucas S."/>
            <person name="Lapidus A."/>
            <person name="Barry K."/>
            <person name="Detter J.C."/>
            <person name="Glavina del Rio T."/>
            <person name="Hammon N."/>
            <person name="Israni S."/>
            <person name="Dalin E."/>
            <person name="Tice H."/>
            <person name="Pitluck S."/>
            <person name="Chertkov O."/>
            <person name="Brettin T."/>
            <person name="Bruce D."/>
            <person name="Han C."/>
            <person name="Schmutz J."/>
            <person name="Larimer F."/>
            <person name="Land M."/>
            <person name="Hauser L."/>
            <person name="Kyrpides N."/>
            <person name="Mikhailova N."/>
            <person name="Shelobolina E."/>
            <person name="Aklujkar M."/>
            <person name="Lovley D."/>
            <person name="Richardson P."/>
        </authorList>
    </citation>
    <scope>NUCLEOTIDE SEQUENCE [LARGE SCALE GENOMIC DNA]</scope>
    <source>
        <strain>ATCC BAA-1134 / JCM 13001 / Rf4</strain>
    </source>
</reference>
<organism>
    <name type="scientific">Geotalea uraniireducens (strain Rf4)</name>
    <name type="common">Geobacter uraniireducens</name>
    <dbReference type="NCBI Taxonomy" id="351605"/>
    <lineage>
        <taxon>Bacteria</taxon>
        <taxon>Pseudomonadati</taxon>
        <taxon>Thermodesulfobacteriota</taxon>
        <taxon>Desulfuromonadia</taxon>
        <taxon>Geobacterales</taxon>
        <taxon>Geobacteraceae</taxon>
        <taxon>Geotalea</taxon>
    </lineage>
</organism>
<accession>A5G3H3</accession>
<gene>
    <name evidence="1" type="primary">purM</name>
    <name type="ordered locus">Gura_2153</name>
</gene>
<sequence length="348" mass="37143">MSESRITYKDAGVDIDAGNTFVKMIKPLVKATSRPEVIADIGGFGGLFSLNSSKYKNPVLVSGTDGVGTKLKIAFLANRHDTIGIDLVAMCVNDIIVQGAEPLFFLDYLATAKLDPEKGASIIKGVSEGCIQAGCALIGGETAEMPGFYSGDEYDMAGFAVGVVDRDKIIDGSSITVGNRLIGIASSGLHSNGYSLARKIIFDKMGLGIDDIIPGLDKTVADELLTPTRIYVRSILNLLRDFPINGIAHITGGGLLENIPRILPNGCKALVHKNSWQPPPIYQILQNAGNIEENELFRTFNCGIGMVLAVPEKEADEVLIRLSGLNEHAFVIGEIAKCEAGSECVEMI</sequence>
<proteinExistence type="inferred from homology"/>